<name>ENK11_HUMAN</name>
<evidence type="ECO:0000250" key="1"/>
<evidence type="ECO:0000305" key="2"/>
<feature type="chain" id="PRO_0000008529" description="Putative endogenous retrovirus group K member 11-1 Env polyprotein">
    <location>
        <begin position="1"/>
        <end position="191"/>
    </location>
</feature>
<feature type="region of interest" description="Truncated surface protein" evidence="1">
    <location>
        <begin position="1"/>
        <end position="191"/>
    </location>
</feature>
<feature type="sequence conflict" description="In Ref. 1; BAC86619." evidence="2" ref="1">
    <original>K</original>
    <variation>R</variation>
    <location>
        <position position="27"/>
    </location>
</feature>
<feature type="sequence conflict" description="In Ref. 1; BAC86619." evidence="2" ref="1">
    <original>G</original>
    <variation>R</variation>
    <location>
        <position position="34"/>
    </location>
</feature>
<protein>
    <recommendedName>
        <fullName>Putative endogenous retrovirus group K member 11-1 Env polyprotein</fullName>
    </recommendedName>
    <alternativeName>
        <fullName>Envelope polyprotein</fullName>
    </alternativeName>
    <alternativeName>
        <fullName>HERV-K_1p13.3 provirus ancestral Env polyprotein</fullName>
    </alternativeName>
    <domain>
        <recommendedName>
            <fullName>Truncated surface protein</fullName>
            <shortName>SU</shortName>
        </recommendedName>
    </domain>
</protein>
<keyword id="KW-0165">Cleavage on pair of basic residues</keyword>
<keyword id="KW-0895">ERV</keyword>
<keyword id="KW-1185">Reference proteome</keyword>
<keyword id="KW-0814">Transposable element</keyword>
<keyword id="KW-0261">Viral envelope protein</keyword>
<keyword id="KW-0946">Virion</keyword>
<dbReference type="EMBL" id="AK126628">
    <property type="protein sequence ID" value="BAC86619.1"/>
    <property type="molecule type" value="mRNA"/>
</dbReference>
<dbReference type="EMBL" id="AK128832">
    <property type="protein sequence ID" value="BAC87632.1"/>
    <property type="molecule type" value="mRNA"/>
</dbReference>
<dbReference type="BioMuta" id="HGNC:43647"/>
<dbReference type="DMDM" id="47605619"/>
<dbReference type="GeneCards" id="ERVK11-1"/>
<dbReference type="HGNC" id="HGNC:43647">
    <property type="gene designation" value="ERVK11-1"/>
</dbReference>
<dbReference type="neXtProt" id="NX_P61568"/>
<dbReference type="InParanoid" id="P61568"/>
<dbReference type="PAN-GO" id="P61568">
    <property type="GO annotations" value="0 GO annotations based on evolutionary models"/>
</dbReference>
<dbReference type="PhylomeDB" id="P61568"/>
<dbReference type="Pharos" id="P61568">
    <property type="development level" value="Tdark"/>
</dbReference>
<dbReference type="Proteomes" id="UP000005640">
    <property type="component" value="Unplaced"/>
</dbReference>
<dbReference type="RNAct" id="P61568">
    <property type="molecule type" value="protein"/>
</dbReference>
<dbReference type="InterPro" id="IPR029104">
    <property type="entry name" value="HERV-K_env"/>
</dbReference>
<dbReference type="InterPro" id="IPR051255">
    <property type="entry name" value="Retroviral_env_glycoprotein"/>
</dbReference>
<dbReference type="PANTHER" id="PTHR34313">
    <property type="entry name" value="ENDOGENOUS RETROVIRUS GROUP K MEMBER 113 ENV POLYPROTEIN-RELATED"/>
    <property type="match status" value="1"/>
</dbReference>
<dbReference type="PANTHER" id="PTHR34313:SF3">
    <property type="entry name" value="ENDOGENOUS RETROVIRUS GROUP K MEMBER 113 ENV POLYPROTEIN-RELATED"/>
    <property type="match status" value="1"/>
</dbReference>
<dbReference type="Pfam" id="PF13804">
    <property type="entry name" value="HERV-K_env_2"/>
    <property type="match status" value="1"/>
</dbReference>
<accession>P61568</accession>
<sequence>MPGAIDDHCPAQPGEEGTAFNVTMGYKYPPLCLGHATRCIHLETQVWAAYLLERLATGKWGHLVSGLSLCPLRQMKRGVIGDTPYFQYKPVGKLCPKNFEGPSKTLIWGDCVNSHAVVLKNDSYALVIDWAPKGYLKNTCSSGGGEFLEATYFISYWEDEDHHPTLHRWFGSFFTLKWEDKDITLHPQGLV</sequence>
<comment type="function">
    <text evidence="1">Retroviral envelope proteins mediate receptor recognition and membrane fusion during early infection. Endogenous envelope proteins may have kept, lost or modified their original function during evolution (By similarity).</text>
</comment>
<comment type="subcellular location">
    <subcellularLocation>
        <location evidence="1">Virion</location>
    </subcellularLocation>
</comment>
<comment type="tissue specificity">
    <text>Cerebellum and testis.</text>
</comment>
<comment type="miscellaneous">
    <text>Intergenic, closest flanking genes being GSTM1 and GSTM5.</text>
</comment>
<comment type="similarity">
    <text evidence="2">Belongs to the beta type-B retroviral envelope protein family. HERV class-II K(HML-8) env subfamily.</text>
</comment>
<comment type="caution">
    <text evidence="2">Truncated; premature stop codon in the surface protein.</text>
</comment>
<comment type="caution">
    <text evidence="2">No predictable signal peptide.</text>
</comment>
<comment type="caution">
    <text evidence="2">Product of a dubious gene prediction.</text>
</comment>
<gene>
    <name type="primary">ERVK11-1</name>
</gene>
<proteinExistence type="uncertain"/>
<reference key="1">
    <citation type="journal article" date="2004" name="Nat. Genet.">
        <title>Complete sequencing and characterization of 21,243 full-length human cDNAs.</title>
        <authorList>
            <person name="Ota T."/>
            <person name="Suzuki Y."/>
            <person name="Nishikawa T."/>
            <person name="Otsuki T."/>
            <person name="Sugiyama T."/>
            <person name="Irie R."/>
            <person name="Wakamatsu A."/>
            <person name="Hayashi K."/>
            <person name="Sato H."/>
            <person name="Nagai K."/>
            <person name="Kimura K."/>
            <person name="Makita H."/>
            <person name="Sekine M."/>
            <person name="Obayashi M."/>
            <person name="Nishi T."/>
            <person name="Shibahara T."/>
            <person name="Tanaka T."/>
            <person name="Ishii S."/>
            <person name="Yamamoto J."/>
            <person name="Saito K."/>
            <person name="Kawai Y."/>
            <person name="Isono Y."/>
            <person name="Nakamura Y."/>
            <person name="Nagahari K."/>
            <person name="Murakami K."/>
            <person name="Yasuda T."/>
            <person name="Iwayanagi T."/>
            <person name="Wagatsuma M."/>
            <person name="Shiratori A."/>
            <person name="Sudo H."/>
            <person name="Hosoiri T."/>
            <person name="Kaku Y."/>
            <person name="Kodaira H."/>
            <person name="Kondo H."/>
            <person name="Sugawara M."/>
            <person name="Takahashi M."/>
            <person name="Kanda K."/>
            <person name="Yokoi T."/>
            <person name="Furuya T."/>
            <person name="Kikkawa E."/>
            <person name="Omura Y."/>
            <person name="Abe K."/>
            <person name="Kamihara K."/>
            <person name="Katsuta N."/>
            <person name="Sato K."/>
            <person name="Tanikawa M."/>
            <person name="Yamazaki M."/>
            <person name="Ninomiya K."/>
            <person name="Ishibashi T."/>
            <person name="Yamashita H."/>
            <person name="Murakawa K."/>
            <person name="Fujimori K."/>
            <person name="Tanai H."/>
            <person name="Kimata M."/>
            <person name="Watanabe M."/>
            <person name="Hiraoka S."/>
            <person name="Chiba Y."/>
            <person name="Ishida S."/>
            <person name="Ono Y."/>
            <person name="Takiguchi S."/>
            <person name="Watanabe S."/>
            <person name="Yosida M."/>
            <person name="Hotuta T."/>
            <person name="Kusano J."/>
            <person name="Kanehori K."/>
            <person name="Takahashi-Fujii A."/>
            <person name="Hara H."/>
            <person name="Tanase T.-O."/>
            <person name="Nomura Y."/>
            <person name="Togiya S."/>
            <person name="Komai F."/>
            <person name="Hara R."/>
            <person name="Takeuchi K."/>
            <person name="Arita M."/>
            <person name="Imose N."/>
            <person name="Musashino K."/>
            <person name="Yuuki H."/>
            <person name="Oshima A."/>
            <person name="Sasaki N."/>
            <person name="Aotsuka S."/>
            <person name="Yoshikawa Y."/>
            <person name="Matsunawa H."/>
            <person name="Ichihara T."/>
            <person name="Shiohata N."/>
            <person name="Sano S."/>
            <person name="Moriya S."/>
            <person name="Momiyama H."/>
            <person name="Satoh N."/>
            <person name="Takami S."/>
            <person name="Terashima Y."/>
            <person name="Suzuki O."/>
            <person name="Nakagawa S."/>
            <person name="Senoh A."/>
            <person name="Mizoguchi H."/>
            <person name="Goto Y."/>
            <person name="Shimizu F."/>
            <person name="Wakebe H."/>
            <person name="Hishigaki H."/>
            <person name="Watanabe T."/>
            <person name="Sugiyama A."/>
            <person name="Takemoto M."/>
            <person name="Kawakami B."/>
            <person name="Yamazaki M."/>
            <person name="Watanabe K."/>
            <person name="Kumagai A."/>
            <person name="Itakura S."/>
            <person name="Fukuzumi Y."/>
            <person name="Fujimori Y."/>
            <person name="Komiyama M."/>
            <person name="Tashiro H."/>
            <person name="Tanigami A."/>
            <person name="Fujiwara T."/>
            <person name="Ono T."/>
            <person name="Yamada K."/>
            <person name="Fujii Y."/>
            <person name="Ozaki K."/>
            <person name="Hirao M."/>
            <person name="Ohmori Y."/>
            <person name="Kawabata A."/>
            <person name="Hikiji T."/>
            <person name="Kobatake N."/>
            <person name="Inagaki H."/>
            <person name="Ikema Y."/>
            <person name="Okamoto S."/>
            <person name="Okitani R."/>
            <person name="Kawakami T."/>
            <person name="Noguchi S."/>
            <person name="Itoh T."/>
            <person name="Shigeta K."/>
            <person name="Senba T."/>
            <person name="Matsumura K."/>
            <person name="Nakajima Y."/>
            <person name="Mizuno T."/>
            <person name="Morinaga M."/>
            <person name="Sasaki M."/>
            <person name="Togashi T."/>
            <person name="Oyama M."/>
            <person name="Hata H."/>
            <person name="Watanabe M."/>
            <person name="Komatsu T."/>
            <person name="Mizushima-Sugano J."/>
            <person name="Satoh T."/>
            <person name="Shirai Y."/>
            <person name="Takahashi Y."/>
            <person name="Nakagawa K."/>
            <person name="Okumura K."/>
            <person name="Nagase T."/>
            <person name="Nomura N."/>
            <person name="Kikuchi H."/>
            <person name="Masuho Y."/>
            <person name="Yamashita R."/>
            <person name="Nakai K."/>
            <person name="Yada T."/>
            <person name="Nakamura Y."/>
            <person name="Ohara O."/>
            <person name="Isogai T."/>
            <person name="Sugano S."/>
        </authorList>
    </citation>
    <scope>NUCLEOTIDE SEQUENCE [LARGE SCALE MRNA]</scope>
    <source>
        <tissue>Cerebellum</tissue>
        <tissue>Testis</tissue>
    </source>
</reference>
<organism>
    <name type="scientific">Homo sapiens</name>
    <name type="common">Human</name>
    <dbReference type="NCBI Taxonomy" id="9606"/>
    <lineage>
        <taxon>Eukaryota</taxon>
        <taxon>Metazoa</taxon>
        <taxon>Chordata</taxon>
        <taxon>Craniata</taxon>
        <taxon>Vertebrata</taxon>
        <taxon>Euteleostomi</taxon>
        <taxon>Mammalia</taxon>
        <taxon>Eutheria</taxon>
        <taxon>Euarchontoglires</taxon>
        <taxon>Primates</taxon>
        <taxon>Haplorrhini</taxon>
        <taxon>Catarrhini</taxon>
        <taxon>Hominidae</taxon>
        <taxon>Homo</taxon>
    </lineage>
</organism>